<evidence type="ECO:0000255" key="1">
    <source>
        <dbReference type="PROSITE-ProRule" id="PRU00303"/>
    </source>
</evidence>
<evidence type="ECO:0000305" key="2"/>
<protein>
    <recommendedName>
        <fullName>TraT complement resistance protein</fullName>
    </recommendedName>
</protein>
<dbReference type="EMBL" id="X06915">
    <property type="protein sequence ID" value="CAA30012.1"/>
    <property type="molecule type" value="Genomic_DNA"/>
</dbReference>
<dbReference type="EMBL" id="U01159">
    <property type="protein sequence ID" value="AAC44197.1"/>
    <property type="molecule type" value="Genomic_DNA"/>
</dbReference>
<dbReference type="EMBL" id="AP001918">
    <property type="protein sequence ID" value="BAA97971.1"/>
    <property type="molecule type" value="Genomic_DNA"/>
</dbReference>
<dbReference type="EMBL" id="M29254">
    <property type="protein sequence ID" value="AAA83927.1"/>
    <property type="molecule type" value="Genomic_DNA"/>
</dbReference>
<dbReference type="PIR" id="S01757">
    <property type="entry name" value="S01757"/>
</dbReference>
<dbReference type="RefSeq" id="NP_061480.1">
    <property type="nucleotide sequence ID" value="NC_002483.1"/>
</dbReference>
<dbReference type="SMR" id="P13979"/>
<dbReference type="PhylomeDB" id="P13979"/>
<dbReference type="GO" id="GO:0009279">
    <property type="term" value="C:cell outer membrane"/>
    <property type="evidence" value="ECO:0007669"/>
    <property type="project" value="UniProtKB-SubCell"/>
</dbReference>
<dbReference type="InterPro" id="IPR008874">
    <property type="entry name" value="TraT_complement-R"/>
</dbReference>
<dbReference type="NCBIfam" id="NF010291">
    <property type="entry name" value="PRK13731.1"/>
    <property type="match status" value="1"/>
</dbReference>
<dbReference type="Pfam" id="PF05818">
    <property type="entry name" value="TraT"/>
    <property type="match status" value="1"/>
</dbReference>
<dbReference type="PIRSF" id="PIRSF002859">
    <property type="entry name" value="Lipo_traT"/>
    <property type="match status" value="1"/>
</dbReference>
<dbReference type="PROSITE" id="PS51257">
    <property type="entry name" value="PROKAR_LIPOPROTEIN"/>
    <property type="match status" value="1"/>
</dbReference>
<organism>
    <name type="scientific">Escherichia coli (strain K12)</name>
    <dbReference type="NCBI Taxonomy" id="83333"/>
    <lineage>
        <taxon>Bacteria</taxon>
        <taxon>Pseudomonadati</taxon>
        <taxon>Pseudomonadota</taxon>
        <taxon>Gammaproteobacteria</taxon>
        <taxon>Enterobacterales</taxon>
        <taxon>Enterobacteriaceae</taxon>
        <taxon>Escherichia</taxon>
    </lineage>
</organism>
<comment type="function">
    <text>Responsible for preventing unproductive conjugation between bacteria carrying like plasmids.</text>
</comment>
<comment type="subcellular location">
    <subcellularLocation>
        <location>Cell outer membrane</location>
        <topology>Lipid-anchor</topology>
    </subcellularLocation>
</comment>
<comment type="similarity">
    <text evidence="2">Belongs to the TraT lipoprotein family.</text>
</comment>
<geneLocation type="plasmid">
    <name>F</name>
</geneLocation>
<gene>
    <name type="primary">traT</name>
    <name type="ordered locus">ECOK12F101</name>
</gene>
<proteinExistence type="inferred from homology"/>
<sequence length="244" mass="26032">MMKTKKLMMVALVSSTLALSGCGAMSTAIKKRNLEVKTQMSETIWLEPASERTVFLQIKNTSDKDMSGLQGKIADAVKAKGYQVVTSPDKAYYWIQANVLKADKMDLRESQGWLNRGYEGAAVGAALGAGITGYNSNSAGATLGVGLAAGLVGMAADAMVEDVNYTMITDVQIAERTKATVTTDNVAALRQGTSGAKIQTSTETGNQHKYQTRVVSNANKVNLKFEEAKPVLEDQLAKSIANIL</sequence>
<reference key="1">
    <citation type="journal article" date="1987" name="J. Mol. Biol.">
        <title>Surface exclusion genes traS and traT of the F sex factor of Escherichia coli K-12. Determination of the nucleotide sequence and promoter and terminator activities.</title>
        <authorList>
            <person name="Jalajakumari M.B."/>
            <person name="Guidolin A."/>
            <person name="Buhj H.J."/>
            <person name="Manning P.A."/>
        </authorList>
    </citation>
    <scope>NUCLEOTIDE SEQUENCE [GENOMIC DNA]</scope>
    <source>
        <strain>K12</strain>
    </source>
</reference>
<reference key="2">
    <citation type="journal article" date="1994" name="Microbiol. Rev.">
        <title>Analysis of the sequence and gene products of the transfer region of the F sex factor.</title>
        <authorList>
            <person name="Frost L.S."/>
            <person name="Ippen-Ihler K."/>
            <person name="Skurray R.A."/>
        </authorList>
    </citation>
    <scope>NUCLEOTIDE SEQUENCE [GENOMIC DNA]</scope>
</reference>
<reference key="3">
    <citation type="submission" date="2000-04" db="EMBL/GenBank/DDBJ databases">
        <title>Complete nucleotide sequence of the F plasmid: its implications for organization and diversification of plasmid genomes.</title>
        <authorList>
            <person name="Shimizu H."/>
            <person name="Saitoh Y."/>
            <person name="Suda Y."/>
            <person name="Uehara K."/>
            <person name="Sampei G."/>
            <person name="Mizobuchi K."/>
        </authorList>
    </citation>
    <scope>NUCLEOTIDE SEQUENCE [LARGE SCALE GENOMIC DNA]</scope>
    <source>
        <strain>K12 / CR63</strain>
    </source>
</reference>
<reference key="4">
    <citation type="journal article" date="1989" name="Gene">
        <title>Nucleotide sequence of the traD region in the Escherichia coli F sex factor.</title>
        <authorList>
            <person name="Jalajakumari M.B."/>
            <person name="Manning P.A."/>
        </authorList>
    </citation>
    <scope>NUCLEOTIDE SEQUENCE [GENOMIC DNA] OF 221-244</scope>
    <source>
        <strain>K12</strain>
    </source>
</reference>
<accession>P13979</accession>
<accession>P07177</accession>
<feature type="signal peptide" evidence="1">
    <location>
        <begin position="1"/>
        <end position="21"/>
    </location>
</feature>
<feature type="chain" id="PRO_0000018204" description="TraT complement resistance protein">
    <location>
        <begin position="22"/>
        <end position="244"/>
    </location>
</feature>
<feature type="lipid moiety-binding region" description="N-palmitoyl cysteine" evidence="1">
    <location>
        <position position="22"/>
    </location>
</feature>
<feature type="lipid moiety-binding region" description="S-diacylglycerol cysteine" evidence="1">
    <location>
        <position position="22"/>
    </location>
</feature>
<feature type="sequence conflict" description="In Ref. 1 and 2." evidence="2" ref="1 2">
    <original>A</original>
    <variation>G</variation>
    <location>
        <position position="141"/>
    </location>
</feature>
<keyword id="KW-0998">Cell outer membrane</keyword>
<keyword id="KW-0184">Conjugation</keyword>
<keyword id="KW-0449">Lipoprotein</keyword>
<keyword id="KW-0472">Membrane</keyword>
<keyword id="KW-0564">Palmitate</keyword>
<keyword id="KW-0614">Plasmid</keyword>
<keyword id="KW-0732">Signal</keyword>
<name>TRAT1_ECOLI</name>